<keyword id="KW-0963">Cytoplasm</keyword>
<keyword id="KW-0275">Fatty acid biosynthesis</keyword>
<keyword id="KW-0276">Fatty acid metabolism</keyword>
<keyword id="KW-0444">Lipid biosynthesis</keyword>
<keyword id="KW-0443">Lipid metabolism</keyword>
<keyword id="KW-0596">Phosphopantetheine</keyword>
<keyword id="KW-0597">Phosphoprotein</keyword>
<accession>Q984T3</accession>
<dbReference type="EMBL" id="BA000012">
    <property type="protein sequence ID" value="BAB54230.1"/>
    <property type="molecule type" value="Genomic_DNA"/>
</dbReference>
<dbReference type="RefSeq" id="WP_006203723.1">
    <property type="nucleotide sequence ID" value="NC_002678.2"/>
</dbReference>
<dbReference type="SMR" id="Q984T3"/>
<dbReference type="KEGG" id="mlo:msr7851"/>
<dbReference type="eggNOG" id="COG0236">
    <property type="taxonomic scope" value="Bacteria"/>
</dbReference>
<dbReference type="HOGENOM" id="CLU_108696_5_1_5"/>
<dbReference type="UniPathway" id="UPA00094"/>
<dbReference type="Proteomes" id="UP000000552">
    <property type="component" value="Chromosome"/>
</dbReference>
<dbReference type="GO" id="GO:0005829">
    <property type="term" value="C:cytosol"/>
    <property type="evidence" value="ECO:0007669"/>
    <property type="project" value="TreeGrafter"/>
</dbReference>
<dbReference type="GO" id="GO:0016020">
    <property type="term" value="C:membrane"/>
    <property type="evidence" value="ECO:0007669"/>
    <property type="project" value="GOC"/>
</dbReference>
<dbReference type="GO" id="GO:0000035">
    <property type="term" value="F:acyl binding"/>
    <property type="evidence" value="ECO:0007669"/>
    <property type="project" value="TreeGrafter"/>
</dbReference>
<dbReference type="GO" id="GO:0000036">
    <property type="term" value="F:acyl carrier activity"/>
    <property type="evidence" value="ECO:0007669"/>
    <property type="project" value="UniProtKB-UniRule"/>
</dbReference>
<dbReference type="GO" id="GO:0031177">
    <property type="term" value="F:phosphopantetheine binding"/>
    <property type="evidence" value="ECO:0007669"/>
    <property type="project" value="InterPro"/>
</dbReference>
<dbReference type="GO" id="GO:0009245">
    <property type="term" value="P:lipid A biosynthetic process"/>
    <property type="evidence" value="ECO:0007669"/>
    <property type="project" value="TreeGrafter"/>
</dbReference>
<dbReference type="FunFam" id="1.10.1200.10:FF:000001">
    <property type="entry name" value="Acyl carrier protein"/>
    <property type="match status" value="1"/>
</dbReference>
<dbReference type="Gene3D" id="1.10.1200.10">
    <property type="entry name" value="ACP-like"/>
    <property type="match status" value="1"/>
</dbReference>
<dbReference type="HAMAP" id="MF_01217">
    <property type="entry name" value="Acyl_carrier"/>
    <property type="match status" value="1"/>
</dbReference>
<dbReference type="InterPro" id="IPR003231">
    <property type="entry name" value="ACP"/>
</dbReference>
<dbReference type="InterPro" id="IPR036736">
    <property type="entry name" value="ACP-like_sf"/>
</dbReference>
<dbReference type="InterPro" id="IPR020806">
    <property type="entry name" value="PKS_PP-bd"/>
</dbReference>
<dbReference type="InterPro" id="IPR009081">
    <property type="entry name" value="PP-bd_ACP"/>
</dbReference>
<dbReference type="InterPro" id="IPR006162">
    <property type="entry name" value="Ppantetheine_attach_site"/>
</dbReference>
<dbReference type="NCBIfam" id="TIGR00517">
    <property type="entry name" value="acyl_carrier"/>
    <property type="match status" value="1"/>
</dbReference>
<dbReference type="NCBIfam" id="NF002148">
    <property type="entry name" value="PRK00982.1-2"/>
    <property type="match status" value="1"/>
</dbReference>
<dbReference type="NCBIfam" id="NF002149">
    <property type="entry name" value="PRK00982.1-3"/>
    <property type="match status" value="1"/>
</dbReference>
<dbReference type="NCBIfam" id="NF002150">
    <property type="entry name" value="PRK00982.1-4"/>
    <property type="match status" value="1"/>
</dbReference>
<dbReference type="NCBIfam" id="NF002151">
    <property type="entry name" value="PRK00982.1-5"/>
    <property type="match status" value="1"/>
</dbReference>
<dbReference type="PANTHER" id="PTHR20863">
    <property type="entry name" value="ACYL CARRIER PROTEIN"/>
    <property type="match status" value="1"/>
</dbReference>
<dbReference type="PANTHER" id="PTHR20863:SF76">
    <property type="entry name" value="CARRIER DOMAIN-CONTAINING PROTEIN"/>
    <property type="match status" value="1"/>
</dbReference>
<dbReference type="Pfam" id="PF00550">
    <property type="entry name" value="PP-binding"/>
    <property type="match status" value="1"/>
</dbReference>
<dbReference type="SMART" id="SM00823">
    <property type="entry name" value="PKS_PP"/>
    <property type="match status" value="1"/>
</dbReference>
<dbReference type="SUPFAM" id="SSF47336">
    <property type="entry name" value="ACP-like"/>
    <property type="match status" value="1"/>
</dbReference>
<dbReference type="PROSITE" id="PS50075">
    <property type="entry name" value="CARRIER"/>
    <property type="match status" value="1"/>
</dbReference>
<dbReference type="PROSITE" id="PS00012">
    <property type="entry name" value="PHOSPHOPANTETHEINE"/>
    <property type="match status" value="1"/>
</dbReference>
<proteinExistence type="inferred from homology"/>
<comment type="function">
    <text evidence="1">Carrier of the growing fatty acid chain in fatty acid biosynthesis.</text>
</comment>
<comment type="pathway">
    <text evidence="1">Lipid metabolism; fatty acid biosynthesis.</text>
</comment>
<comment type="subcellular location">
    <subcellularLocation>
        <location evidence="1">Cytoplasm</location>
    </subcellularLocation>
</comment>
<comment type="PTM">
    <text evidence="1">4'-phosphopantetheine is transferred from CoA to a specific serine of apo-ACP by AcpS. This modification is essential for activity because fatty acids are bound in thioester linkage to the sulfhydryl of the prosthetic group.</text>
</comment>
<comment type="similarity">
    <text evidence="1">Belongs to the acyl carrier protein (ACP) family.</text>
</comment>
<evidence type="ECO:0000255" key="1">
    <source>
        <dbReference type="HAMAP-Rule" id="MF_01217"/>
    </source>
</evidence>
<evidence type="ECO:0000255" key="2">
    <source>
        <dbReference type="PROSITE-ProRule" id="PRU00258"/>
    </source>
</evidence>
<gene>
    <name evidence="1" type="primary">acpP</name>
    <name type="ordered locus">msr7851</name>
</gene>
<organism>
    <name type="scientific">Mesorhizobium japonicum (strain LMG 29417 / CECT 9101 / MAFF 303099)</name>
    <name type="common">Mesorhizobium loti (strain MAFF 303099)</name>
    <dbReference type="NCBI Taxonomy" id="266835"/>
    <lineage>
        <taxon>Bacteria</taxon>
        <taxon>Pseudomonadati</taxon>
        <taxon>Pseudomonadota</taxon>
        <taxon>Alphaproteobacteria</taxon>
        <taxon>Hyphomicrobiales</taxon>
        <taxon>Phyllobacteriaceae</taxon>
        <taxon>Mesorhizobium</taxon>
    </lineage>
</organism>
<name>ACP_RHILO</name>
<sequence length="78" mass="8402">MSDTAERVKKIVIEHLGVDADKVTEQASFIDDLGADSLDTVELVMAFEEEFGVEIPDDAAETILTVGDAVKYIDKASA</sequence>
<feature type="chain" id="PRO_0000180175" description="Acyl carrier protein AcpP">
    <location>
        <begin position="1"/>
        <end position="78"/>
    </location>
</feature>
<feature type="domain" description="Carrier" evidence="2">
    <location>
        <begin position="2"/>
        <end position="77"/>
    </location>
</feature>
<feature type="modified residue" description="O-(pantetheine 4'-phosphoryl)serine" evidence="2">
    <location>
        <position position="37"/>
    </location>
</feature>
<protein>
    <recommendedName>
        <fullName evidence="1">Acyl carrier protein AcpP</fullName>
        <shortName evidence="1">ACP</shortName>
    </recommendedName>
</protein>
<reference key="1">
    <citation type="journal article" date="2000" name="DNA Res.">
        <title>Complete genome structure of the nitrogen-fixing symbiotic bacterium Mesorhizobium loti.</title>
        <authorList>
            <person name="Kaneko T."/>
            <person name="Nakamura Y."/>
            <person name="Sato S."/>
            <person name="Asamizu E."/>
            <person name="Kato T."/>
            <person name="Sasamoto S."/>
            <person name="Watanabe A."/>
            <person name="Idesawa K."/>
            <person name="Ishikawa A."/>
            <person name="Kawashima K."/>
            <person name="Kimura T."/>
            <person name="Kishida Y."/>
            <person name="Kiyokawa C."/>
            <person name="Kohara M."/>
            <person name="Matsumoto M."/>
            <person name="Matsuno A."/>
            <person name="Mochizuki Y."/>
            <person name="Nakayama S."/>
            <person name="Nakazaki N."/>
            <person name="Shimpo S."/>
            <person name="Sugimoto M."/>
            <person name="Takeuchi C."/>
            <person name="Yamada M."/>
            <person name="Tabata S."/>
        </authorList>
    </citation>
    <scope>NUCLEOTIDE SEQUENCE [LARGE SCALE GENOMIC DNA]</scope>
    <source>
        <strain>LMG 29417 / CECT 9101 / MAFF 303099</strain>
    </source>
</reference>